<reference key="1">
    <citation type="journal article" date="2003" name="Nat. Genet.">
        <title>Comparative analysis of the genome sequences of Bordetella pertussis, Bordetella parapertussis and Bordetella bronchiseptica.</title>
        <authorList>
            <person name="Parkhill J."/>
            <person name="Sebaihia M."/>
            <person name="Preston A."/>
            <person name="Murphy L.D."/>
            <person name="Thomson N.R."/>
            <person name="Harris D.E."/>
            <person name="Holden M.T.G."/>
            <person name="Churcher C.M."/>
            <person name="Bentley S.D."/>
            <person name="Mungall K.L."/>
            <person name="Cerdeno-Tarraga A.-M."/>
            <person name="Temple L."/>
            <person name="James K.D."/>
            <person name="Harris B."/>
            <person name="Quail M.A."/>
            <person name="Achtman M."/>
            <person name="Atkin R."/>
            <person name="Baker S."/>
            <person name="Basham D."/>
            <person name="Bason N."/>
            <person name="Cherevach I."/>
            <person name="Chillingworth T."/>
            <person name="Collins M."/>
            <person name="Cronin A."/>
            <person name="Davis P."/>
            <person name="Doggett J."/>
            <person name="Feltwell T."/>
            <person name="Goble A."/>
            <person name="Hamlin N."/>
            <person name="Hauser H."/>
            <person name="Holroyd S."/>
            <person name="Jagels K."/>
            <person name="Leather S."/>
            <person name="Moule S."/>
            <person name="Norberczak H."/>
            <person name="O'Neil S."/>
            <person name="Ormond D."/>
            <person name="Price C."/>
            <person name="Rabbinowitsch E."/>
            <person name="Rutter S."/>
            <person name="Sanders M."/>
            <person name="Saunders D."/>
            <person name="Seeger K."/>
            <person name="Sharp S."/>
            <person name="Simmonds M."/>
            <person name="Skelton J."/>
            <person name="Squares R."/>
            <person name="Squares S."/>
            <person name="Stevens K."/>
            <person name="Unwin L."/>
            <person name="Whitehead S."/>
            <person name="Barrell B.G."/>
            <person name="Maskell D.J."/>
        </authorList>
    </citation>
    <scope>NUCLEOTIDE SEQUENCE [LARGE SCALE GENOMIC DNA]</scope>
    <source>
        <strain>12822 / ATCC BAA-587 / NCTC 13253</strain>
    </source>
</reference>
<sequence>MESRLLDILVCPVCKGRLEFQRAQAELVCNADRLAFPVRDGVPIMLEAEARSLDAEAPAQPS</sequence>
<evidence type="ECO:0000255" key="1">
    <source>
        <dbReference type="HAMAP-Rule" id="MF_01187"/>
    </source>
</evidence>
<comment type="similarity">
    <text evidence="1">Belongs to the UPF0434 family.</text>
</comment>
<organism>
    <name type="scientific">Bordetella parapertussis (strain 12822 / ATCC BAA-587 / NCTC 13253)</name>
    <dbReference type="NCBI Taxonomy" id="257311"/>
    <lineage>
        <taxon>Bacteria</taxon>
        <taxon>Pseudomonadati</taxon>
        <taxon>Pseudomonadota</taxon>
        <taxon>Betaproteobacteria</taxon>
        <taxon>Burkholderiales</taxon>
        <taxon>Alcaligenaceae</taxon>
        <taxon>Bordetella</taxon>
    </lineage>
</organism>
<feature type="chain" id="PRO_0000291064" description="UPF0434 protein BPP2562">
    <location>
        <begin position="1"/>
        <end position="62"/>
    </location>
</feature>
<proteinExistence type="inferred from homology"/>
<gene>
    <name type="ordered locus">BPP2562</name>
</gene>
<accession>Q7W7F8</accession>
<protein>
    <recommendedName>
        <fullName evidence="1">UPF0434 protein BPP2562</fullName>
    </recommendedName>
</protein>
<dbReference type="EMBL" id="BX640430">
    <property type="protein sequence ID" value="CAE37856.1"/>
    <property type="molecule type" value="Genomic_DNA"/>
</dbReference>
<dbReference type="RefSeq" id="WP_003812895.1">
    <property type="nucleotide sequence ID" value="NC_002928.3"/>
</dbReference>
<dbReference type="BMRB" id="Q7W7F8"/>
<dbReference type="SMR" id="Q7W7F8"/>
<dbReference type="GeneID" id="69602668"/>
<dbReference type="KEGG" id="bpa:BPP2562"/>
<dbReference type="HOGENOM" id="CLU_155659_3_0_4"/>
<dbReference type="Proteomes" id="UP000001421">
    <property type="component" value="Chromosome"/>
</dbReference>
<dbReference type="GO" id="GO:0005829">
    <property type="term" value="C:cytosol"/>
    <property type="evidence" value="ECO:0007669"/>
    <property type="project" value="TreeGrafter"/>
</dbReference>
<dbReference type="FunFam" id="2.20.25.10:FF:000002">
    <property type="entry name" value="UPF0434 protein YcaR"/>
    <property type="match status" value="1"/>
</dbReference>
<dbReference type="Gene3D" id="2.20.25.10">
    <property type="match status" value="1"/>
</dbReference>
<dbReference type="HAMAP" id="MF_01187">
    <property type="entry name" value="UPF0434"/>
    <property type="match status" value="1"/>
</dbReference>
<dbReference type="InterPro" id="IPR005651">
    <property type="entry name" value="Trm112-like"/>
</dbReference>
<dbReference type="PANTHER" id="PTHR33505:SF4">
    <property type="entry name" value="PROTEIN PREY, MITOCHONDRIAL"/>
    <property type="match status" value="1"/>
</dbReference>
<dbReference type="PANTHER" id="PTHR33505">
    <property type="entry name" value="ZGC:162634"/>
    <property type="match status" value="1"/>
</dbReference>
<dbReference type="Pfam" id="PF03966">
    <property type="entry name" value="Trm112p"/>
    <property type="match status" value="1"/>
</dbReference>
<dbReference type="SUPFAM" id="SSF158997">
    <property type="entry name" value="Trm112p-like"/>
    <property type="match status" value="1"/>
</dbReference>
<name>Y2562_BORPA</name>